<keyword id="KW-0150">Chloroplast</keyword>
<keyword id="KW-0472">Membrane</keyword>
<keyword id="KW-0602">Photosynthesis</keyword>
<keyword id="KW-0604">Photosystem II</keyword>
<keyword id="KW-0934">Plastid</keyword>
<keyword id="KW-0674">Reaction center</keyword>
<keyword id="KW-0793">Thylakoid</keyword>
<keyword id="KW-0812">Transmembrane</keyword>
<keyword id="KW-1133">Transmembrane helix</keyword>
<reference key="1">
    <citation type="journal article" date="2006" name="Genes Genet. Syst.">
        <title>Complete nucleotide sequence of the cotton (Gossypium barbadense L.) chloroplast genome with a comparative analysis of sequences among 9 dicot plants.</title>
        <authorList>
            <person name="Ibrahim R.I.H."/>
            <person name="Azuma J."/>
            <person name="Sakamoto M."/>
        </authorList>
    </citation>
    <scope>NUCLEOTIDE SEQUENCE [LARGE SCALE GENOMIC DNA]</scope>
</reference>
<organism>
    <name type="scientific">Gossypium barbadense</name>
    <name type="common">Sea Island cotton</name>
    <name type="synonym">Hibiscus barbadensis</name>
    <dbReference type="NCBI Taxonomy" id="3634"/>
    <lineage>
        <taxon>Eukaryota</taxon>
        <taxon>Viridiplantae</taxon>
        <taxon>Streptophyta</taxon>
        <taxon>Embryophyta</taxon>
        <taxon>Tracheophyta</taxon>
        <taxon>Spermatophyta</taxon>
        <taxon>Magnoliopsida</taxon>
        <taxon>eudicotyledons</taxon>
        <taxon>Gunneridae</taxon>
        <taxon>Pentapetalae</taxon>
        <taxon>rosids</taxon>
        <taxon>malvids</taxon>
        <taxon>Malvales</taxon>
        <taxon>Malvaceae</taxon>
        <taxon>Malvoideae</taxon>
        <taxon>Gossypium</taxon>
    </lineage>
</organism>
<evidence type="ECO:0000255" key="1">
    <source>
        <dbReference type="HAMAP-Rule" id="MF_00441"/>
    </source>
</evidence>
<geneLocation type="chloroplast"/>
<protein>
    <recommendedName>
        <fullName evidence="1">Photosystem II reaction center protein K</fullName>
        <shortName evidence="1">PSII-K</shortName>
    </recommendedName>
</protein>
<proteinExistence type="inferred from homology"/>
<comment type="function">
    <text evidence="1">One of the components of the core complex of photosystem II (PSII). PSII is a light-driven water:plastoquinone oxidoreductase that uses light energy to abstract electrons from H(2)O, generating O(2) and a proton gradient subsequently used for ATP formation. It consists of a core antenna complex that captures photons, and an electron transfer chain that converts photonic excitation into a charge separation.</text>
</comment>
<comment type="subunit">
    <text evidence="1">PSII is composed of 1 copy each of membrane proteins PsbA, PsbB, PsbC, PsbD, PsbE, PsbF, PsbH, PsbI, PsbJ, PsbK, PsbL, PsbM, PsbT, PsbX, PsbY, PsbZ, Psb30/Ycf12, at least 3 peripheral proteins of the oxygen-evolving complex and a large number of cofactors. It forms dimeric complexes.</text>
</comment>
<comment type="subcellular location">
    <subcellularLocation>
        <location evidence="1">Plastid</location>
        <location evidence="1">Chloroplast thylakoid membrane</location>
        <topology evidence="1">Single-pass membrane protein</topology>
    </subcellularLocation>
</comment>
<comment type="similarity">
    <text evidence="1">Belongs to the PsbK family.</text>
</comment>
<feature type="propeptide" id="PRO_0000276144" evidence="1">
    <location>
        <begin position="1"/>
        <end position="24"/>
    </location>
</feature>
<feature type="chain" id="PRO_0000276145" description="Photosystem II reaction center protein K" evidence="1">
    <location>
        <begin position="25"/>
        <end position="61"/>
    </location>
</feature>
<feature type="transmembrane region" description="Helical" evidence="1">
    <location>
        <begin position="36"/>
        <end position="56"/>
    </location>
</feature>
<name>PSBK_GOSBA</name>
<accession>A0ZZ18</accession>
<gene>
    <name evidence="1" type="primary">psbK</name>
</gene>
<sequence>MLNIFNLICICFNSALFSSSFLFAKLPEAYAFLNPIVDFMPVIPVLFFLLAFVWQAAVSFR</sequence>
<dbReference type="EMBL" id="AP009123">
    <property type="protein sequence ID" value="BAF41230.1"/>
    <property type="molecule type" value="Genomic_DNA"/>
</dbReference>
<dbReference type="RefSeq" id="YP_913170.1">
    <property type="nucleotide sequence ID" value="NC_008641.1"/>
</dbReference>
<dbReference type="SMR" id="A0ZZ18"/>
<dbReference type="GeneID" id="4575225"/>
<dbReference type="OrthoDB" id="1673137at2759"/>
<dbReference type="GO" id="GO:0009535">
    <property type="term" value="C:chloroplast thylakoid membrane"/>
    <property type="evidence" value="ECO:0007669"/>
    <property type="project" value="UniProtKB-SubCell"/>
</dbReference>
<dbReference type="GO" id="GO:0009539">
    <property type="term" value="C:photosystem II reaction center"/>
    <property type="evidence" value="ECO:0007669"/>
    <property type="project" value="InterPro"/>
</dbReference>
<dbReference type="GO" id="GO:0015979">
    <property type="term" value="P:photosynthesis"/>
    <property type="evidence" value="ECO:0007669"/>
    <property type="project" value="UniProtKB-UniRule"/>
</dbReference>
<dbReference type="HAMAP" id="MF_00441">
    <property type="entry name" value="PSII_PsbK"/>
    <property type="match status" value="1"/>
</dbReference>
<dbReference type="InterPro" id="IPR003687">
    <property type="entry name" value="PSII_PsbK"/>
</dbReference>
<dbReference type="InterPro" id="IPR037270">
    <property type="entry name" value="PSII_PsbK_sf"/>
</dbReference>
<dbReference type="NCBIfam" id="NF002715">
    <property type="entry name" value="PRK02553.1"/>
    <property type="match status" value="1"/>
</dbReference>
<dbReference type="PANTHER" id="PTHR35325">
    <property type="match status" value="1"/>
</dbReference>
<dbReference type="PANTHER" id="PTHR35325:SF1">
    <property type="entry name" value="PHOTOSYSTEM II REACTION CENTER PROTEIN K"/>
    <property type="match status" value="1"/>
</dbReference>
<dbReference type="Pfam" id="PF02533">
    <property type="entry name" value="PsbK"/>
    <property type="match status" value="1"/>
</dbReference>
<dbReference type="SUPFAM" id="SSF161037">
    <property type="entry name" value="Photosystem II reaction center protein K, PsbK"/>
    <property type="match status" value="1"/>
</dbReference>